<sequence length="131" mass="14914">MALSDSIGDFLTRIRNAQLAMHRATRVLFSKMNSSILEILKEEGYILDYEKQVVDNLPSFIVKLKYYEKSPVISDIVRVSKPGCRRYSKYKDISKAYNGLGIFIISTPKGVMTDYNAHKLKVGGEVLCRVF</sequence>
<proteinExistence type="inferred from homology"/>
<evidence type="ECO:0000255" key="1">
    <source>
        <dbReference type="HAMAP-Rule" id="MF_01302"/>
    </source>
</evidence>
<evidence type="ECO:0000305" key="2"/>
<name>RS8_WOLPM</name>
<accession>Q73HA0</accession>
<feature type="chain" id="PRO_0000126525" description="Small ribosomal subunit protein uS8">
    <location>
        <begin position="1"/>
        <end position="131"/>
    </location>
</feature>
<organism>
    <name type="scientific">Wolbachia pipientis wMel</name>
    <dbReference type="NCBI Taxonomy" id="163164"/>
    <lineage>
        <taxon>Bacteria</taxon>
        <taxon>Pseudomonadati</taxon>
        <taxon>Pseudomonadota</taxon>
        <taxon>Alphaproteobacteria</taxon>
        <taxon>Rickettsiales</taxon>
        <taxon>Anaplasmataceae</taxon>
        <taxon>Wolbachieae</taxon>
        <taxon>Wolbachia</taxon>
    </lineage>
</organism>
<keyword id="KW-0687">Ribonucleoprotein</keyword>
<keyword id="KW-0689">Ribosomal protein</keyword>
<keyword id="KW-0694">RNA-binding</keyword>
<keyword id="KW-0699">rRNA-binding</keyword>
<gene>
    <name evidence="1" type="primary">rpsH</name>
    <name type="ordered locus">WD_0667</name>
</gene>
<comment type="function">
    <text evidence="1">One of the primary rRNA binding proteins, it binds directly to 16S rRNA central domain where it helps coordinate assembly of the platform of the 30S subunit.</text>
</comment>
<comment type="subunit">
    <text evidence="1">Part of the 30S ribosomal subunit. Contacts proteins S5 and S12.</text>
</comment>
<comment type="similarity">
    <text evidence="1">Belongs to the universal ribosomal protein uS8 family.</text>
</comment>
<reference key="1">
    <citation type="journal article" date="2004" name="PLoS Biol.">
        <title>Phylogenomics of the reproductive parasite Wolbachia pipientis wMel: a streamlined genome overrun by mobile genetic elements.</title>
        <authorList>
            <person name="Wu M."/>
            <person name="Sun L.V."/>
            <person name="Vamathevan J.J."/>
            <person name="Riegler M."/>
            <person name="DeBoy R.T."/>
            <person name="Brownlie J.C."/>
            <person name="McGraw E.A."/>
            <person name="Martin W."/>
            <person name="Esser C."/>
            <person name="Ahmadinejad N."/>
            <person name="Wiegand C."/>
            <person name="Madupu R."/>
            <person name="Beanan M.J."/>
            <person name="Brinkac L.M."/>
            <person name="Daugherty S.C."/>
            <person name="Durkin A.S."/>
            <person name="Kolonay J.F."/>
            <person name="Nelson W.C."/>
            <person name="Mohamoud Y."/>
            <person name="Lee P."/>
            <person name="Berry K.J."/>
            <person name="Young M.B."/>
            <person name="Utterback T.R."/>
            <person name="Weidman J.F."/>
            <person name="Nierman W.C."/>
            <person name="Paulsen I.T."/>
            <person name="Nelson K.E."/>
            <person name="Tettelin H."/>
            <person name="O'Neill S.L."/>
            <person name="Eisen J.A."/>
        </authorList>
    </citation>
    <scope>NUCLEOTIDE SEQUENCE [LARGE SCALE GENOMIC DNA]</scope>
</reference>
<protein>
    <recommendedName>
        <fullName evidence="1">Small ribosomal subunit protein uS8</fullName>
    </recommendedName>
    <alternativeName>
        <fullName evidence="2">30S ribosomal protein S8</fullName>
    </alternativeName>
</protein>
<dbReference type="EMBL" id="AE017196">
    <property type="protein sequence ID" value="AAS14365.1"/>
    <property type="molecule type" value="Genomic_DNA"/>
</dbReference>
<dbReference type="RefSeq" id="WP_007551150.1">
    <property type="nucleotide sequence ID" value="NZ_OX384529.1"/>
</dbReference>
<dbReference type="SMR" id="Q73HA0"/>
<dbReference type="EnsemblBacteria" id="AAS14365">
    <property type="protein sequence ID" value="AAS14365"/>
    <property type="gene ID" value="WD_0667"/>
</dbReference>
<dbReference type="GeneID" id="70036150"/>
<dbReference type="KEGG" id="wol:WD_0667"/>
<dbReference type="eggNOG" id="COG0096">
    <property type="taxonomic scope" value="Bacteria"/>
</dbReference>
<dbReference type="Proteomes" id="UP000008215">
    <property type="component" value="Chromosome"/>
</dbReference>
<dbReference type="GO" id="GO:1990904">
    <property type="term" value="C:ribonucleoprotein complex"/>
    <property type="evidence" value="ECO:0007669"/>
    <property type="project" value="UniProtKB-KW"/>
</dbReference>
<dbReference type="GO" id="GO:0005840">
    <property type="term" value="C:ribosome"/>
    <property type="evidence" value="ECO:0007669"/>
    <property type="project" value="UniProtKB-KW"/>
</dbReference>
<dbReference type="GO" id="GO:0019843">
    <property type="term" value="F:rRNA binding"/>
    <property type="evidence" value="ECO:0007669"/>
    <property type="project" value="UniProtKB-UniRule"/>
</dbReference>
<dbReference type="GO" id="GO:0003735">
    <property type="term" value="F:structural constituent of ribosome"/>
    <property type="evidence" value="ECO:0007669"/>
    <property type="project" value="InterPro"/>
</dbReference>
<dbReference type="GO" id="GO:0006412">
    <property type="term" value="P:translation"/>
    <property type="evidence" value="ECO:0007669"/>
    <property type="project" value="UniProtKB-UniRule"/>
</dbReference>
<dbReference type="FunFam" id="3.30.1490.10:FF:000001">
    <property type="entry name" value="30S ribosomal protein S8"/>
    <property type="match status" value="1"/>
</dbReference>
<dbReference type="Gene3D" id="3.30.1370.30">
    <property type="match status" value="1"/>
</dbReference>
<dbReference type="Gene3D" id="3.30.1490.10">
    <property type="match status" value="1"/>
</dbReference>
<dbReference type="HAMAP" id="MF_01302_B">
    <property type="entry name" value="Ribosomal_uS8_B"/>
    <property type="match status" value="1"/>
</dbReference>
<dbReference type="InterPro" id="IPR000630">
    <property type="entry name" value="Ribosomal_uS8"/>
</dbReference>
<dbReference type="InterPro" id="IPR047863">
    <property type="entry name" value="Ribosomal_uS8_CS"/>
</dbReference>
<dbReference type="InterPro" id="IPR035987">
    <property type="entry name" value="Ribosomal_uS8_sf"/>
</dbReference>
<dbReference type="NCBIfam" id="NF001109">
    <property type="entry name" value="PRK00136.1"/>
    <property type="match status" value="1"/>
</dbReference>
<dbReference type="PANTHER" id="PTHR11758">
    <property type="entry name" value="40S RIBOSOMAL PROTEIN S15A"/>
    <property type="match status" value="1"/>
</dbReference>
<dbReference type="Pfam" id="PF00410">
    <property type="entry name" value="Ribosomal_S8"/>
    <property type="match status" value="1"/>
</dbReference>
<dbReference type="SUPFAM" id="SSF56047">
    <property type="entry name" value="Ribosomal protein S8"/>
    <property type="match status" value="1"/>
</dbReference>
<dbReference type="PROSITE" id="PS00053">
    <property type="entry name" value="RIBOSOMAL_S8"/>
    <property type="match status" value="1"/>
</dbReference>